<comment type="function">
    <text evidence="1">Participates in the degradation of poly-3-hydroxybutyrate (PHB). It works downstream of poly(3-hydroxybutyrate) depolymerase, hydrolyzing D(-)-3-hydroxybutyrate oligomers of various length (3HB-oligomers) into 3HB-monomers.</text>
</comment>
<comment type="catalytic activity">
    <reaction evidence="1">
        <text>(3R)-hydroxybutanoate dimer + H2O = 2 (R)-3-hydroxybutanoate + H(+)</text>
        <dbReference type="Rhea" id="RHEA:10172"/>
        <dbReference type="ChEBI" id="CHEBI:10979"/>
        <dbReference type="ChEBI" id="CHEBI:10983"/>
        <dbReference type="ChEBI" id="CHEBI:15377"/>
        <dbReference type="ChEBI" id="CHEBI:15378"/>
        <dbReference type="EC" id="3.1.1.22"/>
    </reaction>
</comment>
<comment type="pathway">
    <text evidence="1">Lipid metabolism; butanoate metabolism.</text>
</comment>
<comment type="subcellular location">
    <subcellularLocation>
        <location evidence="1">Secreted</location>
    </subcellularLocation>
</comment>
<comment type="similarity">
    <text evidence="1">Belongs to the D-(-)-3-hydroxybutyrate oligomer hydrolase family.</text>
</comment>
<reference key="1">
    <citation type="journal article" date="2005" name="BMC Genomics">
        <title>Bacterial genome adaptation to niches: divergence of the potential virulence genes in three Burkholderia species of different survival strategies.</title>
        <authorList>
            <person name="Kim H.S."/>
            <person name="Schell M.A."/>
            <person name="Yu Y."/>
            <person name="Ulrich R.L."/>
            <person name="Sarria S.H."/>
            <person name="Nierman W.C."/>
            <person name="DeShazer D."/>
        </authorList>
    </citation>
    <scope>NUCLEOTIDE SEQUENCE [LARGE SCALE GENOMIC DNA]</scope>
    <source>
        <strain>ATCC 700388 / DSM 13276 / CCUG 48851 / CIP 106301 / E264</strain>
    </source>
</reference>
<organism>
    <name type="scientific">Burkholderia thailandensis (strain ATCC 700388 / DSM 13276 / CCUG 48851 / CIP 106301 / E264)</name>
    <dbReference type="NCBI Taxonomy" id="271848"/>
    <lineage>
        <taxon>Bacteria</taxon>
        <taxon>Pseudomonadati</taxon>
        <taxon>Pseudomonadota</taxon>
        <taxon>Betaproteobacteria</taxon>
        <taxon>Burkholderiales</taxon>
        <taxon>Burkholderiaceae</taxon>
        <taxon>Burkholderia</taxon>
        <taxon>pseudomallei group</taxon>
    </lineage>
</organism>
<gene>
    <name type="ordered locus">BTH_I1420</name>
</gene>
<name>HBOH_BURTA</name>
<protein>
    <recommendedName>
        <fullName evidence="1">D-(-)-3-hydroxybutyrate oligomer hydrolase</fullName>
        <shortName evidence="1">3HB-oligomer hydrolase</shortName>
        <shortName evidence="1">3HBOH</shortName>
        <ecNumber evidence="1">3.1.1.22</ecNumber>
    </recommendedName>
</protein>
<feature type="signal peptide" evidence="1">
    <location>
        <begin position="1"/>
        <end position="32"/>
    </location>
</feature>
<feature type="chain" id="PRO_0000314426" description="D-(-)-3-hydroxybutyrate oligomer hydrolase">
    <location>
        <begin position="33"/>
        <end position="698"/>
    </location>
</feature>
<feature type="active site" description="Charge relay system" evidence="1">
    <location>
        <position position="310"/>
    </location>
</feature>
<dbReference type="EC" id="3.1.1.22" evidence="1"/>
<dbReference type="EMBL" id="CP000086">
    <property type="protein sequence ID" value="ABC36292.1"/>
    <property type="molecule type" value="Genomic_DNA"/>
</dbReference>
<dbReference type="RefSeq" id="WP_009889457.1">
    <property type="nucleotide sequence ID" value="NZ_CP008785.1"/>
</dbReference>
<dbReference type="ESTHER" id="burta-hboh">
    <property type="family name" value="OHBut_olig_hydro_put"/>
</dbReference>
<dbReference type="GeneID" id="45121164"/>
<dbReference type="KEGG" id="bte:BTH_I1420"/>
<dbReference type="HOGENOM" id="CLU_420258_0_0_4"/>
<dbReference type="UniPathway" id="UPA00863"/>
<dbReference type="Proteomes" id="UP000001930">
    <property type="component" value="Chromosome I"/>
</dbReference>
<dbReference type="GO" id="GO:0005615">
    <property type="term" value="C:extracellular space"/>
    <property type="evidence" value="ECO:0007669"/>
    <property type="project" value="InterPro"/>
</dbReference>
<dbReference type="GO" id="GO:0047989">
    <property type="term" value="F:hydroxybutyrate-dimer hydrolase activity"/>
    <property type="evidence" value="ECO:0007669"/>
    <property type="project" value="UniProtKB-UniRule"/>
</dbReference>
<dbReference type="GO" id="GO:0019605">
    <property type="term" value="P:butyrate metabolic process"/>
    <property type="evidence" value="ECO:0007669"/>
    <property type="project" value="UniProtKB-UniRule"/>
</dbReference>
<dbReference type="HAMAP" id="MF_01906">
    <property type="entry name" value="3HBOH"/>
    <property type="match status" value="1"/>
</dbReference>
<dbReference type="InterPro" id="IPR029058">
    <property type="entry name" value="AB_hydrolase_fold"/>
</dbReference>
<dbReference type="InterPro" id="IPR016582">
    <property type="entry name" value="OHBut_olig_hydro_put"/>
</dbReference>
<dbReference type="Pfam" id="PF10605">
    <property type="entry name" value="3HBOH"/>
    <property type="match status" value="1"/>
</dbReference>
<dbReference type="PIRSF" id="PIRSF011409">
    <property type="entry name" value="HObutyrate_olig_hydrol"/>
    <property type="match status" value="1"/>
</dbReference>
<dbReference type="SUPFAM" id="SSF53474">
    <property type="entry name" value="alpha/beta-Hydrolases"/>
    <property type="match status" value="1"/>
</dbReference>
<keyword id="KW-0378">Hydrolase</keyword>
<keyword id="KW-0964">Secreted</keyword>
<keyword id="KW-0732">Signal</keyword>
<proteinExistence type="inferred from homology"/>
<evidence type="ECO:0000255" key="1">
    <source>
        <dbReference type="HAMAP-Rule" id="MF_01906"/>
    </source>
</evidence>
<accession>Q2SYN3</accession>
<sequence>MTTIRGGSRRASLPALALLGVLLGACHSDDNAQVNTLPGFVSGNVRKTAYDGASDDLLTAGLGKTGLGSDTRPGFANPAQPTAAELRRLAIYSNYRALVDITPNGGYGRFWGPNVDLAGNDTLGEGKIAGTEYLAYSDDGSGRKNVTLLVQVPASFDPANPCIVTATSSGSRGVYGAIAAAGEWGLKRGCAVAYNDKGGGNGAHEIGTGVVTLIDGTLASASSAGSASLFTASESSSALAAFNSAFPNRYAYKHAHSQQNPEQDWGRVTLQAVEFAYWALNEQFGPAIDGARHGVRYRPGDITTIAASVSNGGAAALAAAEQDTRGWITAVVVGEPQINVRMTPGVTVEQGGVPAPSFGRPLADYATLANLLQPCAAAAVAAVGAPYLSALPVGLTQSIRVQRCATLAAAGLVSGADTASQANDALAQLHAAGYLADSDLLQAPMWDSQAIPAIAVTYANAYTRSRVTDNLCNFSFATTNSVTGAVAPPATSPMTSLFGAGNGVPPTNGINLVFNGASGGVDHRLATPDASFAGAFCLRQLWTANQLGIGANVDAVRVAANLQRKPAIIVQGRSDALVPVNHASRAYVAQNSATEGRASQLSFYEVTNGQHFDAFLSVPGFDTRFVPVHYYDEQALNLMWNHLKSGAPLPPSQVIRTVPRGGVPGAAPALSTANLPPIVQSPGSNAITVNAGVIDVPL</sequence>